<evidence type="ECO:0000305" key="1"/>
<gene>
    <name type="ordered locus">At1g19525</name>
    <name type="ORF">F18O14.27</name>
</gene>
<name>PPR51_ARATH</name>
<dbReference type="EMBL" id="AC025808">
    <property type="protein sequence ID" value="AAF79432.1"/>
    <property type="status" value="ALT_SEQ"/>
    <property type="molecule type" value="Genomic_DNA"/>
</dbReference>
<dbReference type="EMBL" id="CP002684">
    <property type="protein sequence ID" value="AEE29863.1"/>
    <property type="status" value="ALT_SEQ"/>
    <property type="molecule type" value="Genomic_DNA"/>
</dbReference>
<dbReference type="EMBL" id="AY052347">
    <property type="protein sequence ID" value="AAK96539.1"/>
    <property type="status" value="ALT_INIT"/>
    <property type="molecule type" value="mRNA"/>
</dbReference>
<dbReference type="EMBL" id="AY061908">
    <property type="protein sequence ID" value="AAL31235.1"/>
    <property type="status" value="ALT_INIT"/>
    <property type="molecule type" value="mRNA"/>
</dbReference>
<dbReference type="PIR" id="A86328">
    <property type="entry name" value="A86328"/>
</dbReference>
<dbReference type="SMR" id="Q940Z1"/>
<dbReference type="BioGRID" id="23777">
    <property type="interactions" value="7"/>
</dbReference>
<dbReference type="IntAct" id="Q940Z1">
    <property type="interactions" value="1"/>
</dbReference>
<dbReference type="STRING" id="3702.Q940Z1"/>
<dbReference type="PeptideAtlas" id="Q940Z1"/>
<dbReference type="ProteomicsDB" id="236590"/>
<dbReference type="Araport" id="AT1G19525"/>
<dbReference type="TAIR" id="AT1G19525"/>
<dbReference type="HOGENOM" id="CLU_433038_0_0_1"/>
<dbReference type="InParanoid" id="Q940Z1"/>
<dbReference type="PRO" id="PR:Q940Z1"/>
<dbReference type="Proteomes" id="UP000006548">
    <property type="component" value="Chromosome 1"/>
</dbReference>
<dbReference type="ExpressionAtlas" id="Q940Z1">
    <property type="expression patterns" value="baseline and differential"/>
</dbReference>
<dbReference type="Gene3D" id="1.25.40.10">
    <property type="entry name" value="Tetratricopeptide repeat domain"/>
    <property type="match status" value="2"/>
</dbReference>
<dbReference type="InterPro" id="IPR002885">
    <property type="entry name" value="Pentatricopeptide_rpt"/>
</dbReference>
<dbReference type="InterPro" id="IPR033443">
    <property type="entry name" value="PROP1-like_PPR_dom"/>
</dbReference>
<dbReference type="InterPro" id="IPR011990">
    <property type="entry name" value="TPR-like_helical_dom_sf"/>
</dbReference>
<dbReference type="NCBIfam" id="TIGR00756">
    <property type="entry name" value="PPR"/>
    <property type="match status" value="3"/>
</dbReference>
<dbReference type="PANTHER" id="PTHR46862:SF2">
    <property type="entry name" value="OS02G0611400 PROTEIN"/>
    <property type="match status" value="1"/>
</dbReference>
<dbReference type="PANTHER" id="PTHR46862">
    <property type="entry name" value="OS07G0661900 PROTEIN"/>
    <property type="match status" value="1"/>
</dbReference>
<dbReference type="Pfam" id="PF01535">
    <property type="entry name" value="PPR"/>
    <property type="match status" value="2"/>
</dbReference>
<dbReference type="Pfam" id="PF17177">
    <property type="entry name" value="PPR_long"/>
    <property type="match status" value="1"/>
</dbReference>
<dbReference type="PROSITE" id="PS51375">
    <property type="entry name" value="PPR"/>
    <property type="match status" value="7"/>
</dbReference>
<reference key="1">
    <citation type="journal article" date="2000" name="Nature">
        <title>Sequence and analysis of chromosome 1 of the plant Arabidopsis thaliana.</title>
        <authorList>
            <person name="Theologis A."/>
            <person name="Ecker J.R."/>
            <person name="Palm C.J."/>
            <person name="Federspiel N.A."/>
            <person name="Kaul S."/>
            <person name="White O."/>
            <person name="Alonso J."/>
            <person name="Altafi H."/>
            <person name="Araujo R."/>
            <person name="Bowman C.L."/>
            <person name="Brooks S.Y."/>
            <person name="Buehler E."/>
            <person name="Chan A."/>
            <person name="Chao Q."/>
            <person name="Chen H."/>
            <person name="Cheuk R.F."/>
            <person name="Chin C.W."/>
            <person name="Chung M.K."/>
            <person name="Conn L."/>
            <person name="Conway A.B."/>
            <person name="Conway A.R."/>
            <person name="Creasy T.H."/>
            <person name="Dewar K."/>
            <person name="Dunn P."/>
            <person name="Etgu P."/>
            <person name="Feldblyum T.V."/>
            <person name="Feng J.-D."/>
            <person name="Fong B."/>
            <person name="Fujii C.Y."/>
            <person name="Gill J.E."/>
            <person name="Goldsmith A.D."/>
            <person name="Haas B."/>
            <person name="Hansen N.F."/>
            <person name="Hughes B."/>
            <person name="Huizar L."/>
            <person name="Hunter J.L."/>
            <person name="Jenkins J."/>
            <person name="Johnson-Hopson C."/>
            <person name="Khan S."/>
            <person name="Khaykin E."/>
            <person name="Kim C.J."/>
            <person name="Koo H.L."/>
            <person name="Kremenetskaia I."/>
            <person name="Kurtz D.B."/>
            <person name="Kwan A."/>
            <person name="Lam B."/>
            <person name="Langin-Hooper S."/>
            <person name="Lee A."/>
            <person name="Lee J.M."/>
            <person name="Lenz C.A."/>
            <person name="Li J.H."/>
            <person name="Li Y.-P."/>
            <person name="Lin X."/>
            <person name="Liu S.X."/>
            <person name="Liu Z.A."/>
            <person name="Luros J.S."/>
            <person name="Maiti R."/>
            <person name="Marziali A."/>
            <person name="Militscher J."/>
            <person name="Miranda M."/>
            <person name="Nguyen M."/>
            <person name="Nierman W.C."/>
            <person name="Osborne B.I."/>
            <person name="Pai G."/>
            <person name="Peterson J."/>
            <person name="Pham P.K."/>
            <person name="Rizzo M."/>
            <person name="Rooney T."/>
            <person name="Rowley D."/>
            <person name="Sakano H."/>
            <person name="Salzberg S.L."/>
            <person name="Schwartz J.R."/>
            <person name="Shinn P."/>
            <person name="Southwick A.M."/>
            <person name="Sun H."/>
            <person name="Tallon L.J."/>
            <person name="Tambunga G."/>
            <person name="Toriumi M.J."/>
            <person name="Town C.D."/>
            <person name="Utterback T."/>
            <person name="Van Aken S."/>
            <person name="Vaysberg M."/>
            <person name="Vysotskaia V.S."/>
            <person name="Walker M."/>
            <person name="Wu D."/>
            <person name="Yu G."/>
            <person name="Fraser C.M."/>
            <person name="Venter J.C."/>
            <person name="Davis R.W."/>
        </authorList>
    </citation>
    <scope>NUCLEOTIDE SEQUENCE [LARGE SCALE GENOMIC DNA]</scope>
    <source>
        <strain>cv. Columbia</strain>
    </source>
</reference>
<reference key="2">
    <citation type="journal article" date="2017" name="Plant J.">
        <title>Araport11: a complete reannotation of the Arabidopsis thaliana reference genome.</title>
        <authorList>
            <person name="Cheng C.Y."/>
            <person name="Krishnakumar V."/>
            <person name="Chan A.P."/>
            <person name="Thibaud-Nissen F."/>
            <person name="Schobel S."/>
            <person name="Town C.D."/>
        </authorList>
    </citation>
    <scope>GENOME REANNOTATION</scope>
    <source>
        <strain>cv. Columbia</strain>
    </source>
</reference>
<reference key="3">
    <citation type="journal article" date="2003" name="Science">
        <title>Empirical analysis of transcriptional activity in the Arabidopsis genome.</title>
        <authorList>
            <person name="Yamada K."/>
            <person name="Lim J."/>
            <person name="Dale J.M."/>
            <person name="Chen H."/>
            <person name="Shinn P."/>
            <person name="Palm C.J."/>
            <person name="Southwick A.M."/>
            <person name="Wu H.C."/>
            <person name="Kim C.J."/>
            <person name="Nguyen M."/>
            <person name="Pham P.K."/>
            <person name="Cheuk R.F."/>
            <person name="Karlin-Newmann G."/>
            <person name="Liu S.X."/>
            <person name="Lam B."/>
            <person name="Sakano H."/>
            <person name="Wu T."/>
            <person name="Yu G."/>
            <person name="Miranda M."/>
            <person name="Quach H.L."/>
            <person name="Tripp M."/>
            <person name="Chang C.H."/>
            <person name="Lee J.M."/>
            <person name="Toriumi M.J."/>
            <person name="Chan M.M."/>
            <person name="Tang C.C."/>
            <person name="Onodera C.S."/>
            <person name="Deng J.M."/>
            <person name="Akiyama K."/>
            <person name="Ansari Y."/>
            <person name="Arakawa T."/>
            <person name="Banh J."/>
            <person name="Banno F."/>
            <person name="Bowser L."/>
            <person name="Brooks S.Y."/>
            <person name="Carninci P."/>
            <person name="Chao Q."/>
            <person name="Choy N."/>
            <person name="Enju A."/>
            <person name="Goldsmith A.D."/>
            <person name="Gurjal M."/>
            <person name="Hansen N.F."/>
            <person name="Hayashizaki Y."/>
            <person name="Johnson-Hopson C."/>
            <person name="Hsuan V.W."/>
            <person name="Iida K."/>
            <person name="Karnes M."/>
            <person name="Khan S."/>
            <person name="Koesema E."/>
            <person name="Ishida J."/>
            <person name="Jiang P.X."/>
            <person name="Jones T."/>
            <person name="Kawai J."/>
            <person name="Kamiya A."/>
            <person name="Meyers C."/>
            <person name="Nakajima M."/>
            <person name="Narusaka M."/>
            <person name="Seki M."/>
            <person name="Sakurai T."/>
            <person name="Satou M."/>
            <person name="Tamse R."/>
            <person name="Vaysberg M."/>
            <person name="Wallender E.K."/>
            <person name="Wong C."/>
            <person name="Yamamura Y."/>
            <person name="Yuan S."/>
            <person name="Shinozaki K."/>
            <person name="Davis R.W."/>
            <person name="Theologis A."/>
            <person name="Ecker J.R."/>
        </authorList>
    </citation>
    <scope>NUCLEOTIDE SEQUENCE [LARGE SCALE MRNA] OF 24-316</scope>
    <source>
        <strain>cv. Columbia</strain>
    </source>
</reference>
<reference key="4">
    <citation type="journal article" date="2004" name="Plant Cell">
        <title>Genome-wide analysis of Arabidopsis pentatricopeptide repeat proteins reveals their essential role in organelle biogenesis.</title>
        <authorList>
            <person name="Lurin C."/>
            <person name="Andres C."/>
            <person name="Aubourg S."/>
            <person name="Bellaoui M."/>
            <person name="Bitton F."/>
            <person name="Bruyere C."/>
            <person name="Caboche M."/>
            <person name="Debast C."/>
            <person name="Gualberto J."/>
            <person name="Hoffmann B."/>
            <person name="Lecharny A."/>
            <person name="Le Ret M."/>
            <person name="Martin-Magniette M.-L."/>
            <person name="Mireau H."/>
            <person name="Peeters N."/>
            <person name="Renou J.-P."/>
            <person name="Szurek B."/>
            <person name="Taconnat L."/>
            <person name="Small I."/>
        </authorList>
    </citation>
    <scope>GENE FAMILY</scope>
</reference>
<proteinExistence type="evidence at transcript level"/>
<protein>
    <recommendedName>
        <fullName>Pentatricopeptide repeat-containing protein At1g19525</fullName>
    </recommendedName>
</protein>
<keyword id="KW-1185">Reference proteome</keyword>
<keyword id="KW-0677">Repeat</keyword>
<feature type="chain" id="PRO_0000342792" description="Pentatricopeptide repeat-containing protein At1g19525">
    <location>
        <begin position="1"/>
        <end position="316"/>
    </location>
</feature>
<feature type="repeat" description="PPR 1">
    <location>
        <begin position="9"/>
        <end position="43"/>
    </location>
</feature>
<feature type="repeat" description="PPR 2">
    <location>
        <begin position="44"/>
        <end position="78"/>
    </location>
</feature>
<feature type="repeat" description="PPR 3">
    <location>
        <begin position="79"/>
        <end position="113"/>
    </location>
</feature>
<feature type="repeat" description="PPR 4">
    <location>
        <begin position="115"/>
        <end position="149"/>
    </location>
</feature>
<feature type="repeat" description="PPR 5">
    <location>
        <begin position="150"/>
        <end position="184"/>
    </location>
</feature>
<feature type="repeat" description="PPR 6">
    <location>
        <begin position="185"/>
        <end position="219"/>
    </location>
</feature>
<sequence length="316" mass="35253">MSQNGIFPDILTATALVHMYSKSGNFERATEAFENLKSYGLRPDEKIYEAMILGYVNAGKPKLGERLMKEMQAKELKASEEVYMALLRAYAQMGDANGAAGISSSMQYASDGPLSFEAYSLFVEAYGKAGQVDKAKSNFDEMRKLGHKPDDKCIANLVRAYKGENSLDKALRLLLQLEKDGIEIGVITYTVLVDWMANLGLIEEAEQLLVKISQLGEAPPFELQVSLCCMYSGVRNEKKTLQALGVLEAKRDQMGPNEFDKVISALKRGGFEKDARRMYKYMEARKFLPSQRLQMDMVAPPRAFGSGSGRVRRFNS</sequence>
<comment type="similarity">
    <text evidence="1">Belongs to the PPR family. P subfamily.</text>
</comment>
<comment type="sequence caution" evidence="1">
    <conflict type="erroneous gene model prediction">
        <sequence resource="EMBL-CDS" id="AAF79432"/>
    </conflict>
    <text>The predicted gene has been split into 2 genes: At1g19520 and At1g19525.</text>
</comment>
<comment type="sequence caution" evidence="1">
    <conflict type="erroneous initiation">
        <sequence resource="EMBL-CDS" id="AAK96539"/>
    </conflict>
</comment>
<comment type="sequence caution" evidence="1">
    <conflict type="erroneous initiation">
        <sequence resource="EMBL-CDS" id="AAL31235"/>
    </conflict>
</comment>
<comment type="sequence caution" evidence="1">
    <conflict type="erroneous gene model prediction">
        <sequence resource="EMBL-CDS" id="AEE29863"/>
    </conflict>
    <text>The predicted gene has been split into 2 genes: At1g19520 and At1g19525.</text>
</comment>
<comment type="online information" name="Pentatricopeptide repeat proteins">
    <link uri="https://ppr.plantenergy.uwa.edu.au"/>
</comment>
<accession>Q940Z1</accession>
<accession>F4HP74</accession>
<accession>Q9LN43</accession>
<organism>
    <name type="scientific">Arabidopsis thaliana</name>
    <name type="common">Mouse-ear cress</name>
    <dbReference type="NCBI Taxonomy" id="3702"/>
    <lineage>
        <taxon>Eukaryota</taxon>
        <taxon>Viridiplantae</taxon>
        <taxon>Streptophyta</taxon>
        <taxon>Embryophyta</taxon>
        <taxon>Tracheophyta</taxon>
        <taxon>Spermatophyta</taxon>
        <taxon>Magnoliopsida</taxon>
        <taxon>eudicotyledons</taxon>
        <taxon>Gunneridae</taxon>
        <taxon>Pentapetalae</taxon>
        <taxon>rosids</taxon>
        <taxon>malvids</taxon>
        <taxon>Brassicales</taxon>
        <taxon>Brassicaceae</taxon>
        <taxon>Camelineae</taxon>
        <taxon>Arabidopsis</taxon>
    </lineage>
</organism>